<organism>
    <name type="scientific">Yersinia pestis bv. Antiqua (strain Angola)</name>
    <dbReference type="NCBI Taxonomy" id="349746"/>
    <lineage>
        <taxon>Bacteria</taxon>
        <taxon>Pseudomonadati</taxon>
        <taxon>Pseudomonadota</taxon>
        <taxon>Gammaproteobacteria</taxon>
        <taxon>Enterobacterales</taxon>
        <taxon>Yersiniaceae</taxon>
        <taxon>Yersinia</taxon>
    </lineage>
</organism>
<gene>
    <name evidence="1" type="primary">metAS</name>
    <name type="ordered locus">YpAngola_A0637</name>
</gene>
<proteinExistence type="inferred from homology"/>
<evidence type="ECO:0000255" key="1">
    <source>
        <dbReference type="HAMAP-Rule" id="MF_00295"/>
    </source>
</evidence>
<reference key="1">
    <citation type="journal article" date="2010" name="J. Bacteriol.">
        <title>Genome sequence of the deep-rooted Yersinia pestis strain Angola reveals new insights into the evolution and pangenome of the plague bacterium.</title>
        <authorList>
            <person name="Eppinger M."/>
            <person name="Worsham P.L."/>
            <person name="Nikolich M.P."/>
            <person name="Riley D.R."/>
            <person name="Sebastian Y."/>
            <person name="Mou S."/>
            <person name="Achtman M."/>
            <person name="Lindler L.E."/>
            <person name="Ravel J."/>
        </authorList>
    </citation>
    <scope>NUCLEOTIDE SEQUENCE [LARGE SCALE GENOMIC DNA]</scope>
    <source>
        <strain>Angola</strain>
    </source>
</reference>
<sequence length="309" mass="35365">MPIRVPDELPAVSFLRNENVFVMASSRAKTQEIRPLKVLILNLMPKKIETENQFLRLLSNSPLQVDIQLLRVDSRESKNTPTEHLNNFYCDFEDIQDQNFDGLIVTGAPLGLVDFCDVAYWPQIERIIAWAKEHVTSTLFVCWAVQAALNILYGIPKMTREVKLSGIYQHQTLEPLALLTRGFDETFLAPHSRYADFPVEVLQQYTDLDILVSSEEAGAYLFASKDKRVAFVTGHPEYDVDTLAGEYQRDLAAGLNPQVPLNYFPSDDASLRPKASWRSHGHLLFANWLNYYVYQITPFDLRHMNPTLD</sequence>
<dbReference type="EC" id="2.3.1.46" evidence="1"/>
<dbReference type="EMBL" id="CP000901">
    <property type="protein sequence ID" value="ABX85578.1"/>
    <property type="molecule type" value="Genomic_DNA"/>
</dbReference>
<dbReference type="SMR" id="A9R941"/>
<dbReference type="KEGG" id="ypg:YpAngola_A0637"/>
<dbReference type="PATRIC" id="fig|349746.12.peg.1583"/>
<dbReference type="UniPathway" id="UPA00051">
    <property type="reaction ID" value="UER00075"/>
</dbReference>
<dbReference type="GO" id="GO:0005737">
    <property type="term" value="C:cytoplasm"/>
    <property type="evidence" value="ECO:0007669"/>
    <property type="project" value="UniProtKB-SubCell"/>
</dbReference>
<dbReference type="GO" id="GO:0004414">
    <property type="term" value="F:homoserine O-acetyltransferase activity"/>
    <property type="evidence" value="ECO:0007669"/>
    <property type="project" value="UniProtKB-UniRule"/>
</dbReference>
<dbReference type="GO" id="GO:0008899">
    <property type="term" value="F:homoserine O-succinyltransferase activity"/>
    <property type="evidence" value="ECO:0007669"/>
    <property type="project" value="UniProtKB-EC"/>
</dbReference>
<dbReference type="GO" id="GO:0019281">
    <property type="term" value="P:L-methionine biosynthetic process from homoserine via O-succinyl-L-homoserine and cystathionine"/>
    <property type="evidence" value="ECO:0007669"/>
    <property type="project" value="InterPro"/>
</dbReference>
<dbReference type="CDD" id="cd03131">
    <property type="entry name" value="GATase1_HTS"/>
    <property type="match status" value="1"/>
</dbReference>
<dbReference type="FunFam" id="3.40.50.880:FF:000004">
    <property type="entry name" value="Homoserine O-succinyltransferase"/>
    <property type="match status" value="1"/>
</dbReference>
<dbReference type="Gene3D" id="3.40.50.880">
    <property type="match status" value="1"/>
</dbReference>
<dbReference type="HAMAP" id="MF_00295">
    <property type="entry name" value="MetA_acyltransf"/>
    <property type="match status" value="1"/>
</dbReference>
<dbReference type="InterPro" id="IPR029062">
    <property type="entry name" value="Class_I_gatase-like"/>
</dbReference>
<dbReference type="InterPro" id="IPR005697">
    <property type="entry name" value="HST_MetA"/>
</dbReference>
<dbReference type="InterPro" id="IPR033752">
    <property type="entry name" value="MetA_family"/>
</dbReference>
<dbReference type="NCBIfam" id="TIGR01001">
    <property type="entry name" value="metA"/>
    <property type="match status" value="1"/>
</dbReference>
<dbReference type="PANTHER" id="PTHR20919">
    <property type="entry name" value="HOMOSERINE O-SUCCINYLTRANSFERASE"/>
    <property type="match status" value="1"/>
</dbReference>
<dbReference type="PANTHER" id="PTHR20919:SF0">
    <property type="entry name" value="HOMOSERINE O-SUCCINYLTRANSFERASE"/>
    <property type="match status" value="1"/>
</dbReference>
<dbReference type="Pfam" id="PF04204">
    <property type="entry name" value="HTS"/>
    <property type="match status" value="1"/>
</dbReference>
<dbReference type="PIRSF" id="PIRSF000450">
    <property type="entry name" value="H_ser_succinyltr"/>
    <property type="match status" value="1"/>
</dbReference>
<dbReference type="SUPFAM" id="SSF52317">
    <property type="entry name" value="Class I glutamine amidotransferase-like"/>
    <property type="match status" value="1"/>
</dbReference>
<comment type="function">
    <text evidence="1">Transfers a succinyl group from succinyl-CoA to L-homoserine, forming succinyl-L-homoserine.</text>
</comment>
<comment type="catalytic activity">
    <reaction evidence="1">
        <text>L-homoserine + succinyl-CoA = O-succinyl-L-homoserine + CoA</text>
        <dbReference type="Rhea" id="RHEA:22008"/>
        <dbReference type="ChEBI" id="CHEBI:57287"/>
        <dbReference type="ChEBI" id="CHEBI:57292"/>
        <dbReference type="ChEBI" id="CHEBI:57476"/>
        <dbReference type="ChEBI" id="CHEBI:57661"/>
        <dbReference type="EC" id="2.3.1.46"/>
    </reaction>
</comment>
<comment type="pathway">
    <text evidence="1">Amino-acid biosynthesis; L-methionine biosynthesis via de novo pathway; O-succinyl-L-homoserine from L-homoserine: step 1/1.</text>
</comment>
<comment type="subcellular location">
    <subcellularLocation>
        <location evidence="1">Cytoplasm</location>
    </subcellularLocation>
</comment>
<comment type="similarity">
    <text evidence="1">Belongs to the MetA family.</text>
</comment>
<accession>A9R941</accession>
<keyword id="KW-0012">Acyltransferase</keyword>
<keyword id="KW-0028">Amino-acid biosynthesis</keyword>
<keyword id="KW-0963">Cytoplasm</keyword>
<keyword id="KW-0486">Methionine biosynthesis</keyword>
<keyword id="KW-0808">Transferase</keyword>
<feature type="chain" id="PRO_1000115203" description="Homoserine O-succinyltransferase">
    <location>
        <begin position="1"/>
        <end position="309"/>
    </location>
</feature>
<feature type="active site" description="Acyl-thioester intermediate" evidence="1">
    <location>
        <position position="142"/>
    </location>
</feature>
<feature type="active site" description="Proton acceptor" evidence="1">
    <location>
        <position position="235"/>
    </location>
</feature>
<feature type="active site" evidence="1">
    <location>
        <position position="237"/>
    </location>
</feature>
<feature type="binding site" evidence="1">
    <location>
        <position position="163"/>
    </location>
    <ligand>
        <name>substrate</name>
    </ligand>
</feature>
<feature type="binding site" evidence="1">
    <location>
        <position position="192"/>
    </location>
    <ligand>
        <name>substrate</name>
    </ligand>
</feature>
<feature type="binding site" evidence="1">
    <location>
        <position position="249"/>
    </location>
    <ligand>
        <name>substrate</name>
    </ligand>
</feature>
<feature type="site" description="Important for acyl-CoA specificity" evidence="1">
    <location>
        <position position="111"/>
    </location>
</feature>
<feature type="site" description="Important for substrate specificity" evidence="1">
    <location>
        <position position="192"/>
    </location>
</feature>
<name>METAS_YERPG</name>
<protein>
    <recommendedName>
        <fullName evidence="1">Homoserine O-succinyltransferase</fullName>
        <shortName evidence="1">HST</shortName>
        <ecNumber evidence="1">2.3.1.46</ecNumber>
    </recommendedName>
    <alternativeName>
        <fullName evidence="1">Homoserine transsuccinylase</fullName>
        <shortName evidence="1">HTS</shortName>
    </alternativeName>
</protein>